<accession>A5GBW0</accession>
<gene>
    <name type="ordered locus">Gura_0717</name>
</gene>
<keyword id="KW-0547">Nucleotide-binding</keyword>
<keyword id="KW-1185">Reference proteome</keyword>
<reference key="1">
    <citation type="submission" date="2007-05" db="EMBL/GenBank/DDBJ databases">
        <title>Complete sequence of Geobacter uraniireducens Rf4.</title>
        <authorList>
            <consortium name="US DOE Joint Genome Institute"/>
            <person name="Copeland A."/>
            <person name="Lucas S."/>
            <person name="Lapidus A."/>
            <person name="Barry K."/>
            <person name="Detter J.C."/>
            <person name="Glavina del Rio T."/>
            <person name="Hammon N."/>
            <person name="Israni S."/>
            <person name="Dalin E."/>
            <person name="Tice H."/>
            <person name="Pitluck S."/>
            <person name="Chertkov O."/>
            <person name="Brettin T."/>
            <person name="Bruce D."/>
            <person name="Han C."/>
            <person name="Schmutz J."/>
            <person name="Larimer F."/>
            <person name="Land M."/>
            <person name="Hauser L."/>
            <person name="Kyrpides N."/>
            <person name="Mikhailova N."/>
            <person name="Shelobolina E."/>
            <person name="Aklujkar M."/>
            <person name="Lovley D."/>
            <person name="Richardson P."/>
        </authorList>
    </citation>
    <scope>NUCLEOTIDE SEQUENCE [LARGE SCALE GENOMIC DNA]</scope>
    <source>
        <strain>ATCC BAA-1134 / JCM 13001 / Rf4</strain>
    </source>
</reference>
<organism>
    <name type="scientific">Geotalea uraniireducens (strain Rf4)</name>
    <name type="common">Geobacter uraniireducens</name>
    <dbReference type="NCBI Taxonomy" id="351605"/>
    <lineage>
        <taxon>Bacteria</taxon>
        <taxon>Pseudomonadati</taxon>
        <taxon>Thermodesulfobacteriota</taxon>
        <taxon>Desulfuromonadia</taxon>
        <taxon>Geobacterales</taxon>
        <taxon>Geobacteraceae</taxon>
        <taxon>Geotalea</taxon>
    </lineage>
</organism>
<protein>
    <recommendedName>
        <fullName evidence="1">Nucleotide-binding protein Gura_0717</fullName>
    </recommendedName>
</protein>
<name>Y717_GEOUR</name>
<evidence type="ECO:0000255" key="1">
    <source>
        <dbReference type="HAMAP-Rule" id="MF_00632"/>
    </source>
</evidence>
<sequence>MPSFDIVSKVDMQEVDNAVNQTIKEIAQRYDFKGSKSEITQEKDTVKLLSEDDFRLKAIIDILQSKFIKRGISVKALQYGKVENASGGMVRQIITIQQGISKEKGKEINNVIKETKLKVQSQIQEDQLRVTGKNIDDLQEVIQLLKGKDLGVELQFVNFRQ</sequence>
<comment type="function">
    <text evidence="1">Nucleotide-binding protein.</text>
</comment>
<comment type="similarity">
    <text evidence="1">Belongs to the YajQ family.</text>
</comment>
<dbReference type="EMBL" id="CP000698">
    <property type="protein sequence ID" value="ABQ24927.1"/>
    <property type="molecule type" value="Genomic_DNA"/>
</dbReference>
<dbReference type="RefSeq" id="WP_011937651.1">
    <property type="nucleotide sequence ID" value="NC_009483.1"/>
</dbReference>
<dbReference type="SMR" id="A5GBW0"/>
<dbReference type="STRING" id="351605.Gura_0717"/>
<dbReference type="KEGG" id="gur:Gura_0717"/>
<dbReference type="HOGENOM" id="CLU_099839_1_0_7"/>
<dbReference type="OrthoDB" id="9801447at2"/>
<dbReference type="Proteomes" id="UP000006695">
    <property type="component" value="Chromosome"/>
</dbReference>
<dbReference type="GO" id="GO:0005829">
    <property type="term" value="C:cytosol"/>
    <property type="evidence" value="ECO:0007669"/>
    <property type="project" value="TreeGrafter"/>
</dbReference>
<dbReference type="GO" id="GO:0000166">
    <property type="term" value="F:nucleotide binding"/>
    <property type="evidence" value="ECO:0007669"/>
    <property type="project" value="TreeGrafter"/>
</dbReference>
<dbReference type="CDD" id="cd11740">
    <property type="entry name" value="YajQ_like"/>
    <property type="match status" value="1"/>
</dbReference>
<dbReference type="Gene3D" id="3.30.70.860">
    <property type="match status" value="1"/>
</dbReference>
<dbReference type="Gene3D" id="3.30.70.990">
    <property type="entry name" value="YajQ-like, domain 2"/>
    <property type="match status" value="1"/>
</dbReference>
<dbReference type="HAMAP" id="MF_00632">
    <property type="entry name" value="YajQ"/>
    <property type="match status" value="1"/>
</dbReference>
<dbReference type="InterPro" id="IPR007551">
    <property type="entry name" value="DUF520"/>
</dbReference>
<dbReference type="InterPro" id="IPR035571">
    <property type="entry name" value="UPF0234-like_C"/>
</dbReference>
<dbReference type="InterPro" id="IPR035570">
    <property type="entry name" value="UPF0234_N"/>
</dbReference>
<dbReference type="InterPro" id="IPR036183">
    <property type="entry name" value="YajQ-like_sf"/>
</dbReference>
<dbReference type="NCBIfam" id="NF003819">
    <property type="entry name" value="PRK05412.1"/>
    <property type="match status" value="1"/>
</dbReference>
<dbReference type="PANTHER" id="PTHR30476">
    <property type="entry name" value="UPF0234 PROTEIN YAJQ"/>
    <property type="match status" value="1"/>
</dbReference>
<dbReference type="PANTHER" id="PTHR30476:SF0">
    <property type="entry name" value="UPF0234 PROTEIN YAJQ"/>
    <property type="match status" value="1"/>
</dbReference>
<dbReference type="Pfam" id="PF04461">
    <property type="entry name" value="DUF520"/>
    <property type="match status" value="1"/>
</dbReference>
<dbReference type="SUPFAM" id="SSF89963">
    <property type="entry name" value="YajQ-like"/>
    <property type="match status" value="2"/>
</dbReference>
<proteinExistence type="inferred from homology"/>
<feature type="chain" id="PRO_1000082627" description="Nucleotide-binding protein Gura_0717">
    <location>
        <begin position="1"/>
        <end position="161"/>
    </location>
</feature>